<keyword id="KW-0093">Biotin biosynthesis</keyword>
<keyword id="KW-0663">Pyridoxal phosphate</keyword>
<keyword id="KW-1185">Reference proteome</keyword>
<keyword id="KW-0808">Transferase</keyword>
<feature type="chain" id="PRO_0000381057" description="8-amino-7-oxononanoate synthase">
    <location>
        <begin position="1"/>
        <end position="377"/>
    </location>
</feature>
<feature type="binding site" evidence="1">
    <location>
        <position position="13"/>
    </location>
    <ligand>
        <name>substrate</name>
    </ligand>
</feature>
<feature type="binding site" evidence="1">
    <location>
        <begin position="100"/>
        <end position="101"/>
    </location>
    <ligand>
        <name>pyridoxal 5'-phosphate</name>
        <dbReference type="ChEBI" id="CHEBI:597326"/>
    </ligand>
</feature>
<feature type="binding site" evidence="1">
    <location>
        <position position="125"/>
    </location>
    <ligand>
        <name>substrate</name>
    </ligand>
</feature>
<feature type="binding site" evidence="1">
    <location>
        <position position="171"/>
    </location>
    <ligand>
        <name>pyridoxal 5'-phosphate</name>
        <dbReference type="ChEBI" id="CHEBI:597326"/>
    </ligand>
</feature>
<feature type="binding site" evidence="1">
    <location>
        <position position="199"/>
    </location>
    <ligand>
        <name>pyridoxal 5'-phosphate</name>
        <dbReference type="ChEBI" id="CHEBI:597326"/>
    </ligand>
</feature>
<feature type="binding site" evidence="1">
    <location>
        <position position="228"/>
    </location>
    <ligand>
        <name>pyridoxal 5'-phosphate</name>
        <dbReference type="ChEBI" id="CHEBI:597326"/>
    </ligand>
</feature>
<feature type="binding site" evidence="1">
    <location>
        <position position="345"/>
    </location>
    <ligand>
        <name>substrate</name>
    </ligand>
</feature>
<feature type="modified residue" description="N6-(pyridoxal phosphate)lysine" evidence="1">
    <location>
        <position position="231"/>
    </location>
</feature>
<name>BIOF_NITOC</name>
<accession>Q3J9D6</accession>
<organism>
    <name type="scientific">Nitrosococcus oceani (strain ATCC 19707 / BCRC 17464 / JCM 30415 / NCIMB 11848 / C-107)</name>
    <dbReference type="NCBI Taxonomy" id="323261"/>
    <lineage>
        <taxon>Bacteria</taxon>
        <taxon>Pseudomonadati</taxon>
        <taxon>Pseudomonadota</taxon>
        <taxon>Gammaproteobacteria</taxon>
        <taxon>Chromatiales</taxon>
        <taxon>Chromatiaceae</taxon>
        <taxon>Nitrosococcus</taxon>
    </lineage>
</organism>
<evidence type="ECO:0000255" key="1">
    <source>
        <dbReference type="HAMAP-Rule" id="MF_01693"/>
    </source>
</evidence>
<gene>
    <name evidence="1" type="primary">bioF</name>
    <name type="ordered locus">Noc_2100</name>
</gene>
<reference key="1">
    <citation type="journal article" date="2006" name="Appl. Environ. Microbiol.">
        <title>Complete genome sequence of the marine, chemolithoautotrophic, ammonia-oxidizing bacterium Nitrosococcus oceani ATCC 19707.</title>
        <authorList>
            <person name="Klotz M.G."/>
            <person name="Arp D.J."/>
            <person name="Chain P.S.G."/>
            <person name="El-Sheikh A.F."/>
            <person name="Hauser L.J."/>
            <person name="Hommes N.G."/>
            <person name="Larimer F.W."/>
            <person name="Malfatti S.A."/>
            <person name="Norton J.M."/>
            <person name="Poret-Peterson A.T."/>
            <person name="Vergez L.M."/>
            <person name="Ward B.B."/>
        </authorList>
    </citation>
    <scope>NUCLEOTIDE SEQUENCE [LARGE SCALE GENOMIC DNA]</scope>
    <source>
        <strain>ATCC 19707 / BCRC 17464 / JCM 30415 / NCIMB 11848 / C-107</strain>
    </source>
</reference>
<proteinExistence type="inferred from homology"/>
<protein>
    <recommendedName>
        <fullName evidence="1">8-amino-7-oxononanoate synthase</fullName>
        <shortName evidence="1">AONS</shortName>
        <ecNumber evidence="1">2.3.1.47</ecNumber>
    </recommendedName>
    <alternativeName>
        <fullName evidence="1">7-keto-8-amino-pelargonic acid synthase</fullName>
        <shortName evidence="1">7-KAP synthase</shortName>
        <shortName evidence="1">KAPA synthase</shortName>
    </alternativeName>
    <alternativeName>
        <fullName evidence="1">8-amino-7-ketopelargonate synthase</fullName>
    </alternativeName>
</protein>
<dbReference type="EC" id="2.3.1.47" evidence="1"/>
<dbReference type="EMBL" id="CP000127">
    <property type="protein sequence ID" value="ABA58560.1"/>
    <property type="molecule type" value="Genomic_DNA"/>
</dbReference>
<dbReference type="SMR" id="Q3J9D6"/>
<dbReference type="FunCoup" id="Q3J9D6">
    <property type="interactions" value="201"/>
</dbReference>
<dbReference type="STRING" id="323261.Noc_2100"/>
<dbReference type="KEGG" id="noc:Noc_2100"/>
<dbReference type="eggNOG" id="COG0156">
    <property type="taxonomic scope" value="Bacteria"/>
</dbReference>
<dbReference type="HOGENOM" id="CLU_015846_11_2_6"/>
<dbReference type="InParanoid" id="Q3J9D6"/>
<dbReference type="UniPathway" id="UPA00078"/>
<dbReference type="Proteomes" id="UP000006838">
    <property type="component" value="Chromosome"/>
</dbReference>
<dbReference type="GO" id="GO:0008710">
    <property type="term" value="F:8-amino-7-oxononanoate synthase activity"/>
    <property type="evidence" value="ECO:0007669"/>
    <property type="project" value="UniProtKB-UniRule"/>
</dbReference>
<dbReference type="GO" id="GO:0030170">
    <property type="term" value="F:pyridoxal phosphate binding"/>
    <property type="evidence" value="ECO:0007669"/>
    <property type="project" value="UniProtKB-UniRule"/>
</dbReference>
<dbReference type="GO" id="GO:0009102">
    <property type="term" value="P:biotin biosynthetic process"/>
    <property type="evidence" value="ECO:0007669"/>
    <property type="project" value="UniProtKB-UniRule"/>
</dbReference>
<dbReference type="CDD" id="cd06454">
    <property type="entry name" value="KBL_like"/>
    <property type="match status" value="1"/>
</dbReference>
<dbReference type="Gene3D" id="3.90.1150.10">
    <property type="entry name" value="Aspartate Aminotransferase, domain 1"/>
    <property type="match status" value="1"/>
</dbReference>
<dbReference type="Gene3D" id="3.40.640.10">
    <property type="entry name" value="Type I PLP-dependent aspartate aminotransferase-like (Major domain)"/>
    <property type="match status" value="1"/>
</dbReference>
<dbReference type="HAMAP" id="MF_01693">
    <property type="entry name" value="BioF_aminotrans_2"/>
    <property type="match status" value="1"/>
</dbReference>
<dbReference type="InterPro" id="IPR001917">
    <property type="entry name" value="Aminotrans_II_pyridoxalP_BS"/>
</dbReference>
<dbReference type="InterPro" id="IPR004839">
    <property type="entry name" value="Aminotransferase_I/II_large"/>
</dbReference>
<dbReference type="InterPro" id="IPR050087">
    <property type="entry name" value="AON_synthase_class-II"/>
</dbReference>
<dbReference type="InterPro" id="IPR004723">
    <property type="entry name" value="AONS_Archaea/Proteobacteria"/>
</dbReference>
<dbReference type="InterPro" id="IPR022834">
    <property type="entry name" value="AONS_Proteobacteria"/>
</dbReference>
<dbReference type="InterPro" id="IPR015424">
    <property type="entry name" value="PyrdxlP-dep_Trfase"/>
</dbReference>
<dbReference type="InterPro" id="IPR015421">
    <property type="entry name" value="PyrdxlP-dep_Trfase_major"/>
</dbReference>
<dbReference type="InterPro" id="IPR015422">
    <property type="entry name" value="PyrdxlP-dep_Trfase_small"/>
</dbReference>
<dbReference type="NCBIfam" id="TIGR00858">
    <property type="entry name" value="bioF"/>
    <property type="match status" value="1"/>
</dbReference>
<dbReference type="PANTHER" id="PTHR13693:SF100">
    <property type="entry name" value="8-AMINO-7-OXONONANOATE SYNTHASE"/>
    <property type="match status" value="1"/>
</dbReference>
<dbReference type="PANTHER" id="PTHR13693">
    <property type="entry name" value="CLASS II AMINOTRANSFERASE/8-AMINO-7-OXONONANOATE SYNTHASE"/>
    <property type="match status" value="1"/>
</dbReference>
<dbReference type="Pfam" id="PF00155">
    <property type="entry name" value="Aminotran_1_2"/>
    <property type="match status" value="1"/>
</dbReference>
<dbReference type="SUPFAM" id="SSF53383">
    <property type="entry name" value="PLP-dependent transferases"/>
    <property type="match status" value="1"/>
</dbReference>
<dbReference type="PROSITE" id="PS00599">
    <property type="entry name" value="AA_TRANSFER_CLASS_2"/>
    <property type="match status" value="1"/>
</dbReference>
<sequence>MELRQRQTQSLYRYRRVLEGPQGAELQMDGRRILAFCSNDYLGLANHPATRAAFMQGVREYGVGSGAAHLVTGHSRAHHTLEEALAAFVGRPRVLLFSTGYSANLGVISALIGRQDAVFEDRLNHASLLDGGLLAGARFKRYRHRDYQSLEAALTATKARRRLVVTDGVFSMDGALAPLPDLAAVADRFDAWLMVDDAHGLGVLGEEGRGSVAHFGLGMAQAPILVGTLGKALGTFGAFVAGEEALIETLIQQARTYIYTTAPPSAVAVATLASLRLVETESWRRDKLTRLIAQFRQGAAQLGLQLVDSPTPIQPLLVGDAGAAVKLSERLLAQGILVTAIRPPTVPEGSARLRITLTAAHSEAQVARLLESLVQVL</sequence>
<comment type="function">
    <text evidence="1">Catalyzes the decarboxylative condensation of pimeloyl-[acyl-carrier protein] and L-alanine to produce 8-amino-7-oxononanoate (AON), [acyl-carrier protein], and carbon dioxide.</text>
</comment>
<comment type="catalytic activity">
    <reaction evidence="1">
        <text>6-carboxyhexanoyl-[ACP] + L-alanine + H(+) = (8S)-8-amino-7-oxononanoate + holo-[ACP] + CO2</text>
        <dbReference type="Rhea" id="RHEA:42288"/>
        <dbReference type="Rhea" id="RHEA-COMP:9685"/>
        <dbReference type="Rhea" id="RHEA-COMP:9955"/>
        <dbReference type="ChEBI" id="CHEBI:15378"/>
        <dbReference type="ChEBI" id="CHEBI:16526"/>
        <dbReference type="ChEBI" id="CHEBI:57972"/>
        <dbReference type="ChEBI" id="CHEBI:64479"/>
        <dbReference type="ChEBI" id="CHEBI:78846"/>
        <dbReference type="ChEBI" id="CHEBI:149468"/>
        <dbReference type="EC" id="2.3.1.47"/>
    </reaction>
</comment>
<comment type="cofactor">
    <cofactor evidence="1">
        <name>pyridoxal 5'-phosphate</name>
        <dbReference type="ChEBI" id="CHEBI:597326"/>
    </cofactor>
</comment>
<comment type="pathway">
    <text evidence="1">Cofactor biosynthesis; biotin biosynthesis.</text>
</comment>
<comment type="subunit">
    <text evidence="1">Homodimer.</text>
</comment>
<comment type="similarity">
    <text evidence="1">Belongs to the class-II pyridoxal-phosphate-dependent aminotransferase family. BioF subfamily.</text>
</comment>